<gene>
    <name type="primary">ytfI</name>
    <name type="ordered locus">Z5826</name>
    <name type="ordered locus">ECs5193</name>
</gene>
<accession>P58213</accession>
<name>YTFI_ECO57</name>
<organism>
    <name type="scientific">Escherichia coli O157:H7</name>
    <dbReference type="NCBI Taxonomy" id="83334"/>
    <lineage>
        <taxon>Bacteria</taxon>
        <taxon>Pseudomonadati</taxon>
        <taxon>Pseudomonadota</taxon>
        <taxon>Gammaproteobacteria</taxon>
        <taxon>Enterobacterales</taxon>
        <taxon>Enterobacteriaceae</taxon>
        <taxon>Escherichia</taxon>
    </lineage>
</organism>
<keyword id="KW-1185">Reference proteome</keyword>
<proteinExistence type="predicted"/>
<reference key="1">
    <citation type="journal article" date="2001" name="Nature">
        <title>Genome sequence of enterohaemorrhagic Escherichia coli O157:H7.</title>
        <authorList>
            <person name="Perna N.T."/>
            <person name="Plunkett G. III"/>
            <person name="Burland V."/>
            <person name="Mau B."/>
            <person name="Glasner J.D."/>
            <person name="Rose D.J."/>
            <person name="Mayhew G.F."/>
            <person name="Evans P.S."/>
            <person name="Gregor J."/>
            <person name="Kirkpatrick H.A."/>
            <person name="Posfai G."/>
            <person name="Hackett J."/>
            <person name="Klink S."/>
            <person name="Boutin A."/>
            <person name="Shao Y."/>
            <person name="Miller L."/>
            <person name="Grotbeck E.J."/>
            <person name="Davis N.W."/>
            <person name="Lim A."/>
            <person name="Dimalanta E.T."/>
            <person name="Potamousis K."/>
            <person name="Apodaca J."/>
            <person name="Anantharaman T.S."/>
            <person name="Lin J."/>
            <person name="Yen G."/>
            <person name="Schwartz D.C."/>
            <person name="Welch R.A."/>
            <person name="Blattner F.R."/>
        </authorList>
    </citation>
    <scope>NUCLEOTIDE SEQUENCE [LARGE SCALE GENOMIC DNA]</scope>
    <source>
        <strain>O157:H7 / EDL933 / ATCC 700927 / EHEC</strain>
    </source>
</reference>
<reference key="2">
    <citation type="journal article" date="2001" name="DNA Res.">
        <title>Complete genome sequence of enterohemorrhagic Escherichia coli O157:H7 and genomic comparison with a laboratory strain K-12.</title>
        <authorList>
            <person name="Hayashi T."/>
            <person name="Makino K."/>
            <person name="Ohnishi M."/>
            <person name="Kurokawa K."/>
            <person name="Ishii K."/>
            <person name="Yokoyama K."/>
            <person name="Han C.-G."/>
            <person name="Ohtsubo E."/>
            <person name="Nakayama K."/>
            <person name="Murata T."/>
            <person name="Tanaka M."/>
            <person name="Tobe T."/>
            <person name="Iida T."/>
            <person name="Takami H."/>
            <person name="Honda T."/>
            <person name="Sasakawa C."/>
            <person name="Ogasawara N."/>
            <person name="Yasunaga T."/>
            <person name="Kuhara S."/>
            <person name="Shiba T."/>
            <person name="Hattori M."/>
            <person name="Shinagawa H."/>
        </authorList>
    </citation>
    <scope>NUCLEOTIDE SEQUENCE [LARGE SCALE GENOMIC DNA]</scope>
    <source>
        <strain>O157:H7 / Sakai / RIMD 0509952 / EHEC</strain>
    </source>
</reference>
<feature type="chain" id="PRO_0000169827" description="Uncharacterized protein YtfI">
    <location>
        <begin position="1"/>
        <end position="312"/>
    </location>
</feature>
<protein>
    <recommendedName>
        <fullName>Uncharacterized protein YtfI</fullName>
    </recommendedName>
</protein>
<dbReference type="EMBL" id="AE005174">
    <property type="protein sequence ID" value="AAG59413.1"/>
    <property type="molecule type" value="Genomic_DNA"/>
</dbReference>
<dbReference type="EMBL" id="BA000007">
    <property type="protein sequence ID" value="BAB38616.1"/>
    <property type="molecule type" value="Genomic_DNA"/>
</dbReference>
<dbReference type="PIR" id="A86119">
    <property type="entry name" value="A86119"/>
</dbReference>
<dbReference type="PIR" id="A98278">
    <property type="entry name" value="A98278"/>
</dbReference>
<dbReference type="RefSeq" id="NP_313220.1">
    <property type="nucleotide sequence ID" value="NC_002695.1"/>
</dbReference>
<dbReference type="RefSeq" id="WP_000937658.1">
    <property type="nucleotide sequence ID" value="NZ_VOAI01000023.1"/>
</dbReference>
<dbReference type="GeneID" id="913942"/>
<dbReference type="KEGG" id="ece:Z5826"/>
<dbReference type="KEGG" id="ecs:ECs_5193"/>
<dbReference type="PATRIC" id="fig|386585.9.peg.5428"/>
<dbReference type="eggNOG" id="ENOG5033S2K">
    <property type="taxonomic scope" value="Bacteria"/>
</dbReference>
<dbReference type="HOGENOM" id="CLU_088882_0_0_6"/>
<dbReference type="OMA" id="WEFFRCA"/>
<dbReference type="Proteomes" id="UP000000558">
    <property type="component" value="Chromosome"/>
</dbReference>
<dbReference type="Proteomes" id="UP000002519">
    <property type="component" value="Chromosome"/>
</dbReference>
<sequence>MLPRIRHNNFIGAVELFVKSSYTKTHSNNFFNNIHHAFKKKDWISNYDSLLTLREFFRCATQIDKSSYQVLSSKNETVNAMDKFLISFSLKDNGAEYTMTLRGSGFEYEEIPITINEYNSFMDFKNREFPLEQNRRLYAWDILQKKQSDIPKRIKGYIHQAIGDVSLGYALLDDIVSKLKRGKFELQGPGGGIKQCDGWYIYEKIIDDNFAIVIESLGFALKIYGGDERFRNGSSVVLEDEDYSLIYNFLVNAGCQQVELAEQVDAIVSANLAADSDITKEKICEKYKSTIEAFKKEQLALPVLVRRKNSET</sequence>